<evidence type="ECO:0000250" key="1"/>
<evidence type="ECO:0000255" key="2">
    <source>
        <dbReference type="PROSITE-ProRule" id="PRU00068"/>
    </source>
</evidence>
<evidence type="ECO:0000269" key="3">
    <source>
    </source>
</evidence>
<evidence type="ECO:0000305" key="4"/>
<comment type="function">
    <text evidence="3">Has antiplatelet activities on human, followed by human, guinea pig, rabbit and rat platelet-rich plasma.</text>
</comment>
<comment type="subunit">
    <text evidence="1">Monomer.</text>
</comment>
<comment type="subcellular location">
    <subcellularLocation>
        <location evidence="3">Secreted</location>
    </subcellularLocation>
</comment>
<comment type="tissue specificity">
    <text evidence="3">Expressed by the venom gland.</text>
</comment>
<comment type="miscellaneous">
    <text>The disintegrin belongs to the short disintegrin subfamily.</text>
</comment>
<comment type="similarity">
    <text evidence="4">Belongs to the venom metalloproteinase (M12B) family. P-II subfamily. P-IIa sub-subfamily.</text>
</comment>
<dbReference type="PIR" id="S53431">
    <property type="entry name" value="S53431"/>
</dbReference>
<dbReference type="SMR" id="Q7LZK1"/>
<dbReference type="GO" id="GO:0005576">
    <property type="term" value="C:extracellular region"/>
    <property type="evidence" value="ECO:0007669"/>
    <property type="project" value="UniProtKB-SubCell"/>
</dbReference>
<dbReference type="GO" id="GO:0090729">
    <property type="term" value="F:toxin activity"/>
    <property type="evidence" value="ECO:0007669"/>
    <property type="project" value="UniProtKB-KW"/>
</dbReference>
<dbReference type="Gene3D" id="4.10.70.10">
    <property type="entry name" value="Disintegrin domain"/>
    <property type="match status" value="1"/>
</dbReference>
<dbReference type="InterPro" id="IPR018358">
    <property type="entry name" value="Disintegrin_CS"/>
</dbReference>
<dbReference type="InterPro" id="IPR001762">
    <property type="entry name" value="Disintegrin_dom"/>
</dbReference>
<dbReference type="InterPro" id="IPR036436">
    <property type="entry name" value="Disintegrin_dom_sf"/>
</dbReference>
<dbReference type="PRINTS" id="PR00289">
    <property type="entry name" value="DISINTEGRIN"/>
</dbReference>
<dbReference type="SMART" id="SM00050">
    <property type="entry name" value="DISIN"/>
    <property type="match status" value="1"/>
</dbReference>
<dbReference type="SUPFAM" id="SSF57552">
    <property type="entry name" value="Blood coagulation inhibitor (disintegrin)"/>
    <property type="match status" value="1"/>
</dbReference>
<dbReference type="PROSITE" id="PS00427">
    <property type="entry name" value="DISINTEGRIN_1"/>
    <property type="match status" value="1"/>
</dbReference>
<dbReference type="PROSITE" id="PS50214">
    <property type="entry name" value="DISINTEGRIN_2"/>
    <property type="match status" value="1"/>
</dbReference>
<sequence length="50" mass="5562">DCASGPCCRDCKFLKEGTICKRARGDNMDDYCNGKTCDCPRNPHKGEHDP</sequence>
<protein>
    <recommendedName>
        <fullName>Disintegrin echistatin-beta</fullName>
    </recommendedName>
</protein>
<accession>Q7LZK1</accession>
<feature type="chain" id="PRO_0000329975" description="Disintegrin echistatin-beta">
    <location>
        <begin position="1"/>
        <end position="50"/>
    </location>
</feature>
<feature type="domain" description="Disintegrin" evidence="2">
    <location>
        <begin position="1"/>
        <end position="47"/>
    </location>
</feature>
<feature type="short sequence motif" description="Cell attachment site">
    <location>
        <begin position="24"/>
        <end position="26"/>
    </location>
</feature>
<feature type="disulfide bond" evidence="2 3">
    <location>
        <begin position="2"/>
        <end position="11"/>
    </location>
</feature>
<feature type="disulfide bond" evidence="2 3">
    <location>
        <begin position="7"/>
        <end position="32"/>
    </location>
</feature>
<feature type="disulfide bond" evidence="2 3">
    <location>
        <begin position="8"/>
        <end position="37"/>
    </location>
</feature>
<feature type="disulfide bond" evidence="2 3">
    <location>
        <begin position="20"/>
        <end position="39"/>
    </location>
</feature>
<organism>
    <name type="scientific">Echis pyramidum leakeyi</name>
    <name type="common">Leakey's carpet viper</name>
    <name type="synonym">Echis carinatus leakeyi</name>
    <dbReference type="NCBI Taxonomy" id="38415"/>
    <lineage>
        <taxon>Eukaryota</taxon>
        <taxon>Metazoa</taxon>
        <taxon>Chordata</taxon>
        <taxon>Craniata</taxon>
        <taxon>Vertebrata</taxon>
        <taxon>Euteleostomi</taxon>
        <taxon>Lepidosauria</taxon>
        <taxon>Squamata</taxon>
        <taxon>Bifurcata</taxon>
        <taxon>Unidentata</taxon>
        <taxon>Episquamata</taxon>
        <taxon>Toxicofera</taxon>
        <taxon>Serpentes</taxon>
        <taxon>Colubroidea</taxon>
        <taxon>Viperidae</taxon>
        <taxon>Viperinae</taxon>
        <taxon>Echis</taxon>
    </lineage>
</organism>
<name>VM2EB_ECHPL</name>
<proteinExistence type="evidence at protein level"/>
<keyword id="KW-1217">Cell adhesion impairing toxin</keyword>
<keyword id="KW-0903">Direct protein sequencing</keyword>
<keyword id="KW-1015">Disulfide bond</keyword>
<keyword id="KW-1199">Hemostasis impairing toxin</keyword>
<keyword id="KW-1201">Platelet aggregation inhibiting toxin</keyword>
<keyword id="KW-0964">Secreted</keyword>
<keyword id="KW-0800">Toxin</keyword>
<reference key="1">
    <citation type="journal article" date="1995" name="Biochem. J.">
        <title>Determination of the structure of two novel echistatin variants and comparison of the ability of echistatin variants to inhibit aggregation of platelets from different species.</title>
        <authorList>
            <person name="Chen Y.-L."/>
            <person name="Huang T.-F."/>
            <person name="Chen S.-W."/>
            <person name="Tsai I.-H."/>
        </authorList>
    </citation>
    <scope>PROTEIN SEQUENCE</scope>
    <scope>FUNCTION</scope>
    <scope>SUBCELLULAR LOCATION</scope>
    <scope>TISSUE SPECIFICITY</scope>
    <scope>DISULFIDE BONDS</scope>
    <source>
        <tissue>Venom</tissue>
    </source>
</reference>